<keyword id="KW-1003">Cell membrane</keyword>
<keyword id="KW-0472">Membrane</keyword>
<keyword id="KW-1185">Reference proteome</keyword>
<keyword id="KW-0812">Transmembrane</keyword>
<keyword id="KW-1133">Transmembrane helix</keyword>
<keyword id="KW-0813">Transport</keyword>
<protein>
    <recommendedName>
        <fullName>Cobalamin import system permease protein BtuC</fullName>
    </recommendedName>
</protein>
<organism>
    <name type="scientific">Halobacterium salinarum (strain ATCC 700922 / JCM 11081 / NRC-1)</name>
    <name type="common">Halobacterium halobium</name>
    <dbReference type="NCBI Taxonomy" id="64091"/>
    <lineage>
        <taxon>Archaea</taxon>
        <taxon>Methanobacteriati</taxon>
        <taxon>Methanobacteriota</taxon>
        <taxon>Stenosarchaea group</taxon>
        <taxon>Halobacteria</taxon>
        <taxon>Halobacteriales</taxon>
        <taxon>Halobacteriaceae</taxon>
        <taxon>Halobacterium</taxon>
        <taxon>Halobacterium salinarum NRC-34001</taxon>
    </lineage>
</organism>
<sequence>MREASARAVAWSAAAGVLLVAVLLVSATIGPEPITLRTVAMAALTELAVPVGASVTMHTHAVPVVSGGLPWPALTIAYAAPLQFGVPETAQVIVGTIRLPRIVLGATVGASLAISGAVLQGFFRNPMADPSIVGVSSGAAVGAVAAITLPSVVVIGVQPAAFAGALIAAFTVYAIATKNGHTPTATLLLSGVAVQTLLGAVTSFLVVNSGREIRPAMYWLMGTLHGSRWHDVEAALPVVVVGSAVLLAYAREMNVLLAGEEDAHTLGVDVDRTKRLLLAVASVVTAAAVSFAGAIGFVGLIVPHAVRLVVGPDHRVLLPVSALTGGAFLVAADTVARATATEPPVGIITALIGAPFFLYLLRDREVRAL</sequence>
<accession>Q9HQ19</accession>
<name>BTUCA_HALSA</name>
<dbReference type="EMBL" id="AE004437">
    <property type="protein sequence ID" value="AAG19698.1"/>
    <property type="molecule type" value="Genomic_DNA"/>
</dbReference>
<dbReference type="PIR" id="F84291">
    <property type="entry name" value="F84291"/>
</dbReference>
<dbReference type="RefSeq" id="WP_010902994.1">
    <property type="nucleotide sequence ID" value="NC_002607.1"/>
</dbReference>
<dbReference type="SMR" id="Q9HQ19"/>
<dbReference type="FunCoup" id="Q9HQ19">
    <property type="interactions" value="13"/>
</dbReference>
<dbReference type="STRING" id="64091.VNG_1370G"/>
<dbReference type="TCDB" id="3.A.1.14.9">
    <property type="family name" value="the atp-binding cassette (abc) superfamily"/>
</dbReference>
<dbReference type="PaxDb" id="64091-VNG_1370G"/>
<dbReference type="GeneID" id="89349683"/>
<dbReference type="KEGG" id="hal:VNG_1370G"/>
<dbReference type="PATRIC" id="fig|64091.14.peg.1046"/>
<dbReference type="HOGENOM" id="CLU_013016_0_1_2"/>
<dbReference type="InParanoid" id="Q9HQ19"/>
<dbReference type="OrthoDB" id="57034at2157"/>
<dbReference type="PhylomeDB" id="Q9HQ19"/>
<dbReference type="Proteomes" id="UP000000554">
    <property type="component" value="Chromosome"/>
</dbReference>
<dbReference type="GO" id="GO:0005886">
    <property type="term" value="C:plasma membrane"/>
    <property type="evidence" value="ECO:0000318"/>
    <property type="project" value="GO_Central"/>
</dbReference>
<dbReference type="GO" id="GO:0022857">
    <property type="term" value="F:transmembrane transporter activity"/>
    <property type="evidence" value="ECO:0000318"/>
    <property type="project" value="GO_Central"/>
</dbReference>
<dbReference type="CDD" id="cd06550">
    <property type="entry name" value="TM_ABC_iron-siderophores_like"/>
    <property type="match status" value="1"/>
</dbReference>
<dbReference type="FunFam" id="1.10.3470.10:FF:000001">
    <property type="entry name" value="Vitamin B12 ABC transporter permease BtuC"/>
    <property type="match status" value="1"/>
</dbReference>
<dbReference type="Gene3D" id="1.10.3470.10">
    <property type="entry name" value="ABC transporter involved in vitamin B12 uptake, BtuC"/>
    <property type="match status" value="1"/>
</dbReference>
<dbReference type="InterPro" id="IPR037294">
    <property type="entry name" value="ABC_BtuC-like"/>
</dbReference>
<dbReference type="InterPro" id="IPR000522">
    <property type="entry name" value="ABC_transptr_permease_BtuC"/>
</dbReference>
<dbReference type="NCBIfam" id="NF007081">
    <property type="entry name" value="PRK09535.1"/>
    <property type="match status" value="1"/>
</dbReference>
<dbReference type="PANTHER" id="PTHR30472:SF25">
    <property type="entry name" value="ABC TRANSPORTER PERMEASE PROTEIN MJ0876-RELATED"/>
    <property type="match status" value="1"/>
</dbReference>
<dbReference type="PANTHER" id="PTHR30472">
    <property type="entry name" value="FERRIC ENTEROBACTIN TRANSPORT SYSTEM PERMEASE PROTEIN"/>
    <property type="match status" value="1"/>
</dbReference>
<dbReference type="Pfam" id="PF01032">
    <property type="entry name" value="FecCD"/>
    <property type="match status" value="1"/>
</dbReference>
<dbReference type="SUPFAM" id="SSF81345">
    <property type="entry name" value="ABC transporter involved in vitamin B12 uptake, BtuC"/>
    <property type="match status" value="1"/>
</dbReference>
<evidence type="ECO:0000250" key="1"/>
<evidence type="ECO:0000255" key="2"/>
<evidence type="ECO:0000269" key="3">
    <source>
    </source>
</evidence>
<evidence type="ECO:0000305" key="4"/>
<comment type="function">
    <text evidence="3">Required for corrinoid utilization. Probably part of the ABC transporter complex BtuCDF involved in cobalamin (vitamin B12) import. Probably involved in the translocation of the substrate across the membrane.</text>
</comment>
<comment type="subunit">
    <text evidence="4">The complex is composed of two ATP-binding proteins (BtuD), two transmembrane proteins (BtuC) and a solute-binding protein (BtuF).</text>
</comment>
<comment type="subcellular location">
    <subcellularLocation>
        <location evidence="1">Cell membrane</location>
        <topology evidence="1">Multi-pass membrane protein</topology>
    </subcellularLocation>
</comment>
<comment type="similarity">
    <text evidence="4">Belongs to the binding-protein-dependent transport system permease family. FecCD subfamily.</text>
</comment>
<gene>
    <name type="primary">btuC</name>
    <name type="synonym">hemU</name>
    <name type="ordered locus">VNG_1370G</name>
</gene>
<reference key="1">
    <citation type="journal article" date="2000" name="Proc. Natl. Acad. Sci. U.S.A.">
        <title>Genome sequence of Halobacterium species NRC-1.</title>
        <authorList>
            <person name="Ng W.V."/>
            <person name="Kennedy S.P."/>
            <person name="Mahairas G.G."/>
            <person name="Berquist B."/>
            <person name="Pan M."/>
            <person name="Shukla H.D."/>
            <person name="Lasky S.R."/>
            <person name="Baliga N.S."/>
            <person name="Thorsson V."/>
            <person name="Sbrogna J."/>
            <person name="Swartzell S."/>
            <person name="Weir D."/>
            <person name="Hall J."/>
            <person name="Dahl T.A."/>
            <person name="Welti R."/>
            <person name="Goo Y.A."/>
            <person name="Leithauser B."/>
            <person name="Keller K."/>
            <person name="Cruz R."/>
            <person name="Danson M.J."/>
            <person name="Hough D.W."/>
            <person name="Maddocks D.G."/>
            <person name="Jablonski P.E."/>
            <person name="Krebs M.P."/>
            <person name="Angevine C.M."/>
            <person name="Dale H."/>
            <person name="Isenbarger T.A."/>
            <person name="Peck R.F."/>
            <person name="Pohlschroder M."/>
            <person name="Spudich J.L."/>
            <person name="Jung K.-H."/>
            <person name="Alam M."/>
            <person name="Freitas T."/>
            <person name="Hou S."/>
            <person name="Daniels C.J."/>
            <person name="Dennis P.P."/>
            <person name="Omer A.D."/>
            <person name="Ebhardt H."/>
            <person name="Lowe T.M."/>
            <person name="Liang P."/>
            <person name="Riley M."/>
            <person name="Hood L."/>
            <person name="DasSarma S."/>
        </authorList>
    </citation>
    <scope>NUCLEOTIDE SEQUENCE [LARGE SCALE GENOMIC DNA]</scope>
    <source>
        <strain>ATCC 700922 / JCM 11081 / NRC-1</strain>
    </source>
</reference>
<reference key="2">
    <citation type="journal article" date="2005" name="J. Bacteriol.">
        <title>ABC transporter for corrinoids in Halobacterium sp. strain NRC-1.</title>
        <authorList>
            <person name="Woodson J.D."/>
            <person name="Reynolds A.A."/>
            <person name="Escalante-Semerena J.C."/>
        </authorList>
    </citation>
    <scope>FUNCTION IN CORRINOID UTILIZATION</scope>
    <source>
        <strain>ATCC 700922 / JCM 11081 / NRC-1</strain>
    </source>
</reference>
<feature type="chain" id="PRO_0000408967" description="Cobalamin import system permease protein BtuC">
    <location>
        <begin position="1"/>
        <end position="369"/>
    </location>
</feature>
<feature type="transmembrane region" description="Helical" evidence="2">
    <location>
        <begin position="9"/>
        <end position="29"/>
    </location>
</feature>
<feature type="transmembrane region" description="Helical" evidence="2">
    <location>
        <begin position="62"/>
        <end position="82"/>
    </location>
</feature>
<feature type="transmembrane region" description="Helical" evidence="2">
    <location>
        <begin position="102"/>
        <end position="122"/>
    </location>
</feature>
<feature type="transmembrane region" description="Helical" evidence="2">
    <location>
        <begin position="130"/>
        <end position="150"/>
    </location>
</feature>
<feature type="transmembrane region" description="Helical" evidence="2">
    <location>
        <begin position="152"/>
        <end position="172"/>
    </location>
</feature>
<feature type="transmembrane region" description="Helical" evidence="2">
    <location>
        <begin position="187"/>
        <end position="207"/>
    </location>
</feature>
<feature type="transmembrane region" description="Helical" evidence="2">
    <location>
        <begin position="229"/>
        <end position="249"/>
    </location>
</feature>
<feature type="transmembrane region" description="Helical" evidence="2">
    <location>
        <begin position="283"/>
        <end position="303"/>
    </location>
</feature>
<feature type="transmembrane region" description="Helical" evidence="2">
    <location>
        <begin position="316"/>
        <end position="336"/>
    </location>
</feature>
<feature type="transmembrane region" description="Helical" evidence="2">
    <location>
        <begin position="341"/>
        <end position="361"/>
    </location>
</feature>
<proteinExistence type="evidence at protein level"/>